<evidence type="ECO:0000255" key="1">
    <source>
        <dbReference type="HAMAP-Rule" id="MF_00479"/>
    </source>
</evidence>
<feature type="chain" id="PRO_1000135566" description="Ion-translocating oxidoreductase complex subunit G">
    <location>
        <begin position="1"/>
        <end position="212"/>
    </location>
</feature>
<feature type="transmembrane region" description="Helical" evidence="1">
    <location>
        <begin position="9"/>
        <end position="29"/>
    </location>
</feature>
<feature type="modified residue" description="FMN phosphoryl threonine" evidence="1">
    <location>
        <position position="176"/>
    </location>
</feature>
<name>RNFG_SHEB2</name>
<sequence length="212" mass="23149">MKNPMIKNGFLLALFALICTGLVAAVNQQTVDKIKQQEQQELMRVLHQLIPDEMHDNELTAQCTLLLDKDALGTDSPMPAYIATSAGKPVAIAIEAIAPDGYNGNIKLIVGISTKGEVLGVRTLAHQETPGLGDKIDLRKSNWVSQFVGKVLGSADDKQWLVKKDGGDFDQFTGATITPRAYVKAVKNAVWYFNNNQAQIFSLPLNCEANHD</sequence>
<protein>
    <recommendedName>
        <fullName evidence="1">Ion-translocating oxidoreductase complex subunit G</fullName>
        <ecNumber evidence="1">7.-.-.-</ecNumber>
    </recommendedName>
    <alternativeName>
        <fullName evidence="1">Rnf electron transport complex subunit G</fullName>
    </alternativeName>
</protein>
<proteinExistence type="inferred from homology"/>
<gene>
    <name evidence="1" type="primary">rnfG</name>
    <name type="ordered locus">Sbal223_2277</name>
</gene>
<keyword id="KW-0997">Cell inner membrane</keyword>
<keyword id="KW-1003">Cell membrane</keyword>
<keyword id="KW-0249">Electron transport</keyword>
<keyword id="KW-0285">Flavoprotein</keyword>
<keyword id="KW-0288">FMN</keyword>
<keyword id="KW-0472">Membrane</keyword>
<keyword id="KW-0597">Phosphoprotein</keyword>
<keyword id="KW-1278">Translocase</keyword>
<keyword id="KW-0812">Transmembrane</keyword>
<keyword id="KW-1133">Transmembrane helix</keyword>
<keyword id="KW-0813">Transport</keyword>
<reference key="1">
    <citation type="submission" date="2008-12" db="EMBL/GenBank/DDBJ databases">
        <title>Complete sequence of chromosome of Shewanella baltica OS223.</title>
        <authorList>
            <consortium name="US DOE Joint Genome Institute"/>
            <person name="Lucas S."/>
            <person name="Copeland A."/>
            <person name="Lapidus A."/>
            <person name="Glavina del Rio T."/>
            <person name="Dalin E."/>
            <person name="Tice H."/>
            <person name="Bruce D."/>
            <person name="Goodwin L."/>
            <person name="Pitluck S."/>
            <person name="Chertkov O."/>
            <person name="Meincke L."/>
            <person name="Brettin T."/>
            <person name="Detter J.C."/>
            <person name="Han C."/>
            <person name="Kuske C.R."/>
            <person name="Larimer F."/>
            <person name="Land M."/>
            <person name="Hauser L."/>
            <person name="Kyrpides N."/>
            <person name="Ovchinnikova G."/>
            <person name="Brettar I."/>
            <person name="Rodrigues J."/>
            <person name="Konstantinidis K."/>
            <person name="Tiedje J."/>
        </authorList>
    </citation>
    <scope>NUCLEOTIDE SEQUENCE [LARGE SCALE GENOMIC DNA]</scope>
    <source>
        <strain>OS223</strain>
    </source>
</reference>
<organism>
    <name type="scientific">Shewanella baltica (strain OS223)</name>
    <dbReference type="NCBI Taxonomy" id="407976"/>
    <lineage>
        <taxon>Bacteria</taxon>
        <taxon>Pseudomonadati</taxon>
        <taxon>Pseudomonadota</taxon>
        <taxon>Gammaproteobacteria</taxon>
        <taxon>Alteromonadales</taxon>
        <taxon>Shewanellaceae</taxon>
        <taxon>Shewanella</taxon>
    </lineage>
</organism>
<accession>B8E552</accession>
<comment type="function">
    <text evidence="1">Part of a membrane-bound complex that couples electron transfer with translocation of ions across the membrane.</text>
</comment>
<comment type="cofactor">
    <cofactor evidence="1">
        <name>FMN</name>
        <dbReference type="ChEBI" id="CHEBI:58210"/>
    </cofactor>
</comment>
<comment type="subunit">
    <text evidence="1">The complex is composed of six subunits: RnfA, RnfB, RnfC, RnfD, RnfE and RnfG.</text>
</comment>
<comment type="subcellular location">
    <subcellularLocation>
        <location evidence="1">Cell inner membrane</location>
        <topology evidence="1">Single-pass membrane protein</topology>
    </subcellularLocation>
</comment>
<comment type="similarity">
    <text evidence="1">Belongs to the RnfG family.</text>
</comment>
<dbReference type="EC" id="7.-.-.-" evidence="1"/>
<dbReference type="EMBL" id="CP001252">
    <property type="protein sequence ID" value="ACK46776.1"/>
    <property type="molecule type" value="Genomic_DNA"/>
</dbReference>
<dbReference type="SMR" id="B8E552"/>
<dbReference type="DNASU" id="7086404"/>
<dbReference type="KEGG" id="sbp:Sbal223_2277"/>
<dbReference type="HOGENOM" id="CLU_077882_1_0_6"/>
<dbReference type="Proteomes" id="UP000002507">
    <property type="component" value="Chromosome"/>
</dbReference>
<dbReference type="GO" id="GO:0005886">
    <property type="term" value="C:plasma membrane"/>
    <property type="evidence" value="ECO:0007669"/>
    <property type="project" value="UniProtKB-SubCell"/>
</dbReference>
<dbReference type="GO" id="GO:0009055">
    <property type="term" value="F:electron transfer activity"/>
    <property type="evidence" value="ECO:0007669"/>
    <property type="project" value="InterPro"/>
</dbReference>
<dbReference type="GO" id="GO:0010181">
    <property type="term" value="F:FMN binding"/>
    <property type="evidence" value="ECO:0007669"/>
    <property type="project" value="InterPro"/>
</dbReference>
<dbReference type="GO" id="GO:0022900">
    <property type="term" value="P:electron transport chain"/>
    <property type="evidence" value="ECO:0007669"/>
    <property type="project" value="UniProtKB-UniRule"/>
</dbReference>
<dbReference type="HAMAP" id="MF_00479">
    <property type="entry name" value="RsxG_RnfG"/>
    <property type="match status" value="1"/>
</dbReference>
<dbReference type="InterPro" id="IPR007329">
    <property type="entry name" value="FMN-bd"/>
</dbReference>
<dbReference type="InterPro" id="IPR010209">
    <property type="entry name" value="Ion_transpt_RnfG/RsxG"/>
</dbReference>
<dbReference type="NCBIfam" id="NF002519">
    <property type="entry name" value="PRK01908.1"/>
    <property type="match status" value="1"/>
</dbReference>
<dbReference type="NCBIfam" id="TIGR01947">
    <property type="entry name" value="rnfG"/>
    <property type="match status" value="1"/>
</dbReference>
<dbReference type="PANTHER" id="PTHR36118">
    <property type="entry name" value="ION-TRANSLOCATING OXIDOREDUCTASE COMPLEX SUBUNIT G"/>
    <property type="match status" value="1"/>
</dbReference>
<dbReference type="PANTHER" id="PTHR36118:SF1">
    <property type="entry name" value="ION-TRANSLOCATING OXIDOREDUCTASE COMPLEX SUBUNIT G"/>
    <property type="match status" value="1"/>
</dbReference>
<dbReference type="Pfam" id="PF04205">
    <property type="entry name" value="FMN_bind"/>
    <property type="match status" value="1"/>
</dbReference>
<dbReference type="PIRSF" id="PIRSF006091">
    <property type="entry name" value="E_trnsport_RnfG"/>
    <property type="match status" value="1"/>
</dbReference>
<dbReference type="SMART" id="SM00900">
    <property type="entry name" value="FMN_bind"/>
    <property type="match status" value="1"/>
</dbReference>